<reference key="1">
    <citation type="journal article" date="2005" name="Nucleic Acids Res.">
        <title>Genomic blueprint of Hahella chejuensis, a marine microbe producing an algicidal agent.</title>
        <authorList>
            <person name="Jeong H."/>
            <person name="Yim J.H."/>
            <person name="Lee C."/>
            <person name="Choi S.-H."/>
            <person name="Park Y.K."/>
            <person name="Yoon S.H."/>
            <person name="Hur C.-G."/>
            <person name="Kang H.-Y."/>
            <person name="Kim D."/>
            <person name="Lee H.H."/>
            <person name="Park K.H."/>
            <person name="Park S.-H."/>
            <person name="Park H.-S."/>
            <person name="Lee H.K."/>
            <person name="Oh T.K."/>
            <person name="Kim J.F."/>
        </authorList>
    </citation>
    <scope>NUCLEOTIDE SEQUENCE [LARGE SCALE GENOMIC DNA]</scope>
    <source>
        <strain>KCTC 2396</strain>
    </source>
</reference>
<organism>
    <name type="scientific">Hahella chejuensis (strain KCTC 2396)</name>
    <dbReference type="NCBI Taxonomy" id="349521"/>
    <lineage>
        <taxon>Bacteria</taxon>
        <taxon>Pseudomonadati</taxon>
        <taxon>Pseudomonadota</taxon>
        <taxon>Gammaproteobacteria</taxon>
        <taxon>Oceanospirillales</taxon>
        <taxon>Hahellaceae</taxon>
        <taxon>Hahella</taxon>
    </lineage>
</organism>
<feature type="chain" id="PRO_0000319521" description="ATP phosphoribosyltransferase">
    <location>
        <begin position="1"/>
        <end position="211"/>
    </location>
</feature>
<protein>
    <recommendedName>
        <fullName evidence="1">ATP phosphoribosyltransferase</fullName>
        <shortName evidence="1">ATP-PRT</shortName>
        <shortName evidence="1">ATP-PRTase</shortName>
        <ecNumber evidence="1">2.4.2.17</ecNumber>
    </recommendedName>
</protein>
<proteinExistence type="inferred from homology"/>
<comment type="function">
    <text evidence="1">Catalyzes the condensation of ATP and 5-phosphoribose 1-diphosphate to form N'-(5'-phosphoribosyl)-ATP (PR-ATP). Has a crucial role in the pathway because the rate of histidine biosynthesis seems to be controlled primarily by regulation of HisG enzymatic activity.</text>
</comment>
<comment type="catalytic activity">
    <reaction evidence="1">
        <text>1-(5-phospho-beta-D-ribosyl)-ATP + diphosphate = 5-phospho-alpha-D-ribose 1-diphosphate + ATP</text>
        <dbReference type="Rhea" id="RHEA:18473"/>
        <dbReference type="ChEBI" id="CHEBI:30616"/>
        <dbReference type="ChEBI" id="CHEBI:33019"/>
        <dbReference type="ChEBI" id="CHEBI:58017"/>
        <dbReference type="ChEBI" id="CHEBI:73183"/>
        <dbReference type="EC" id="2.4.2.17"/>
    </reaction>
</comment>
<comment type="pathway">
    <text evidence="1">Amino-acid biosynthesis; L-histidine biosynthesis; L-histidine from 5-phospho-alpha-D-ribose 1-diphosphate: step 1/9.</text>
</comment>
<comment type="subunit">
    <text evidence="1">Heteromultimer composed of HisG and HisZ subunits.</text>
</comment>
<comment type="subcellular location">
    <subcellularLocation>
        <location evidence="1">Cytoplasm</location>
    </subcellularLocation>
</comment>
<comment type="domain">
    <text>Lacks the C-terminal regulatory region which is replaced by HisZ.</text>
</comment>
<comment type="similarity">
    <text evidence="1">Belongs to the ATP phosphoribosyltransferase family. Short subfamily.</text>
</comment>
<keyword id="KW-0028">Amino-acid biosynthesis</keyword>
<keyword id="KW-0067">ATP-binding</keyword>
<keyword id="KW-0963">Cytoplasm</keyword>
<keyword id="KW-0328">Glycosyltransferase</keyword>
<keyword id="KW-0368">Histidine biosynthesis</keyword>
<keyword id="KW-0547">Nucleotide-binding</keyword>
<keyword id="KW-1185">Reference proteome</keyword>
<keyword id="KW-0808">Transferase</keyword>
<dbReference type="EC" id="2.4.2.17" evidence="1"/>
<dbReference type="EMBL" id="CP000155">
    <property type="protein sequence ID" value="ABC31979.1"/>
    <property type="molecule type" value="Genomic_DNA"/>
</dbReference>
<dbReference type="RefSeq" id="WP_011399043.1">
    <property type="nucleotide sequence ID" value="NC_007645.1"/>
</dbReference>
<dbReference type="SMR" id="Q2SBJ5"/>
<dbReference type="STRING" id="349521.HCH_05306"/>
<dbReference type="KEGG" id="hch:HCH_05306"/>
<dbReference type="eggNOG" id="COG0040">
    <property type="taxonomic scope" value="Bacteria"/>
</dbReference>
<dbReference type="HOGENOM" id="CLU_038115_2_0_6"/>
<dbReference type="OrthoDB" id="9801867at2"/>
<dbReference type="UniPathway" id="UPA00031">
    <property type="reaction ID" value="UER00006"/>
</dbReference>
<dbReference type="Proteomes" id="UP000000238">
    <property type="component" value="Chromosome"/>
</dbReference>
<dbReference type="GO" id="GO:0005737">
    <property type="term" value="C:cytoplasm"/>
    <property type="evidence" value="ECO:0007669"/>
    <property type="project" value="UniProtKB-SubCell"/>
</dbReference>
<dbReference type="GO" id="GO:0005524">
    <property type="term" value="F:ATP binding"/>
    <property type="evidence" value="ECO:0007669"/>
    <property type="project" value="UniProtKB-KW"/>
</dbReference>
<dbReference type="GO" id="GO:0003879">
    <property type="term" value="F:ATP phosphoribosyltransferase activity"/>
    <property type="evidence" value="ECO:0007669"/>
    <property type="project" value="UniProtKB-UniRule"/>
</dbReference>
<dbReference type="GO" id="GO:0000105">
    <property type="term" value="P:L-histidine biosynthetic process"/>
    <property type="evidence" value="ECO:0007669"/>
    <property type="project" value="UniProtKB-UniRule"/>
</dbReference>
<dbReference type="CDD" id="cd13595">
    <property type="entry name" value="PBP2_HisGs"/>
    <property type="match status" value="1"/>
</dbReference>
<dbReference type="FunFam" id="3.40.190.10:FF:000011">
    <property type="entry name" value="ATP phosphoribosyltransferase"/>
    <property type="match status" value="1"/>
</dbReference>
<dbReference type="Gene3D" id="3.40.190.10">
    <property type="entry name" value="Periplasmic binding protein-like II"/>
    <property type="match status" value="2"/>
</dbReference>
<dbReference type="HAMAP" id="MF_01018">
    <property type="entry name" value="HisG_Short"/>
    <property type="match status" value="1"/>
</dbReference>
<dbReference type="InterPro" id="IPR013820">
    <property type="entry name" value="ATP_PRibTrfase_cat"/>
</dbReference>
<dbReference type="InterPro" id="IPR018198">
    <property type="entry name" value="ATP_PRibTrfase_CS"/>
</dbReference>
<dbReference type="InterPro" id="IPR001348">
    <property type="entry name" value="ATP_PRibTrfase_HisG"/>
</dbReference>
<dbReference type="InterPro" id="IPR024893">
    <property type="entry name" value="ATP_PRibTrfase_HisG_short"/>
</dbReference>
<dbReference type="NCBIfam" id="TIGR00070">
    <property type="entry name" value="hisG"/>
    <property type="match status" value="1"/>
</dbReference>
<dbReference type="PANTHER" id="PTHR21403:SF8">
    <property type="entry name" value="ATP PHOSPHORIBOSYLTRANSFERASE"/>
    <property type="match status" value="1"/>
</dbReference>
<dbReference type="PANTHER" id="PTHR21403">
    <property type="entry name" value="ATP PHOSPHORIBOSYLTRANSFERASE ATP-PRTASE"/>
    <property type="match status" value="1"/>
</dbReference>
<dbReference type="Pfam" id="PF01634">
    <property type="entry name" value="HisG"/>
    <property type="match status" value="1"/>
</dbReference>
<dbReference type="SUPFAM" id="SSF53850">
    <property type="entry name" value="Periplasmic binding protein-like II"/>
    <property type="match status" value="1"/>
</dbReference>
<dbReference type="PROSITE" id="PS01316">
    <property type="entry name" value="ATP_P_PHORIBOSYLTR"/>
    <property type="match status" value="1"/>
</dbReference>
<gene>
    <name evidence="1" type="primary">hisG</name>
    <name type="ordered locus">HCH_05306</name>
</gene>
<evidence type="ECO:0000255" key="1">
    <source>
        <dbReference type="HAMAP-Rule" id="MF_01018"/>
    </source>
</evidence>
<accession>Q2SBJ5</accession>
<name>HIS1_HAHCH</name>
<sequence length="211" mass="22643">MSAIITIALSKGRILDDTLPLLAAADIEPEDDIKKSRKLIFSTNQPNVRLVVLRATDVPTYVQHGVADLGVAGKDVLMEHGYDGLYEPLDLKIATCRLMTAAMKGAAPKSGRIKVATKFVNIAKRYYAGKGIQADIIKLYGGMELAPLMGLADEIVDIVDTGNTLVANGLEPREKICDISSRLIANSASMKMKHASLQPILDKLAQAVGAE</sequence>